<feature type="chain" id="PRO_0000130706" description="Large ribosomal subunit protein uL24">
    <location>
        <begin position="1"/>
        <end position="113"/>
    </location>
</feature>
<gene>
    <name evidence="1" type="primary">rplX</name>
    <name type="ordered locus">RP648</name>
</gene>
<reference key="1">
    <citation type="journal article" date="1998" name="Nature">
        <title>The genome sequence of Rickettsia prowazekii and the origin of mitochondria.</title>
        <authorList>
            <person name="Andersson S.G.E."/>
            <person name="Zomorodipour A."/>
            <person name="Andersson J.O."/>
            <person name="Sicheritz-Ponten T."/>
            <person name="Alsmark U.C.M."/>
            <person name="Podowski R.M."/>
            <person name="Naeslund A.K."/>
            <person name="Eriksson A.-S."/>
            <person name="Winkler H.H."/>
            <person name="Kurland C.G."/>
        </authorList>
    </citation>
    <scope>NUCLEOTIDE SEQUENCE [LARGE SCALE GENOMIC DNA]</scope>
    <source>
        <strain>Madrid E</strain>
    </source>
</reference>
<keyword id="KW-1185">Reference proteome</keyword>
<keyword id="KW-0687">Ribonucleoprotein</keyword>
<keyword id="KW-0689">Ribosomal protein</keyword>
<keyword id="KW-0694">RNA-binding</keyword>
<keyword id="KW-0699">rRNA-binding</keyword>
<sequence length="113" mass="12245">MIKLKVKKGDEVVIITGKYKGKKGKVLKVFPEENTVVVSGVNLVKKHTKPNKMSEGGIITQESPIHISNIAHIDPKTGNPTKVAFKFLEDGSKVRVAKKSGEIIGKVGNNVKV</sequence>
<comment type="function">
    <text evidence="1">One of two assembly initiator proteins, it binds directly to the 5'-end of the 23S rRNA, where it nucleates assembly of the 50S subunit.</text>
</comment>
<comment type="function">
    <text evidence="1">One of the proteins that surrounds the polypeptide exit tunnel on the outside of the subunit.</text>
</comment>
<comment type="subunit">
    <text evidence="1">Part of the 50S ribosomal subunit.</text>
</comment>
<comment type="similarity">
    <text evidence="1">Belongs to the universal ribosomal protein uL24 family.</text>
</comment>
<dbReference type="EMBL" id="AJ235272">
    <property type="protein sequence ID" value="CAA15088.1"/>
    <property type="molecule type" value="Genomic_DNA"/>
</dbReference>
<dbReference type="PIR" id="F71670">
    <property type="entry name" value="F71670"/>
</dbReference>
<dbReference type="RefSeq" id="NP_221012.1">
    <property type="nucleotide sequence ID" value="NC_000963.1"/>
</dbReference>
<dbReference type="RefSeq" id="WP_004596219.1">
    <property type="nucleotide sequence ID" value="NC_000963.1"/>
</dbReference>
<dbReference type="SMR" id="Q9ZCR6"/>
<dbReference type="STRING" id="272947.gene:17555725"/>
<dbReference type="EnsemblBacteria" id="CAA15088">
    <property type="protein sequence ID" value="CAA15088"/>
    <property type="gene ID" value="CAA15088"/>
</dbReference>
<dbReference type="GeneID" id="57569773"/>
<dbReference type="KEGG" id="rpr:RP648"/>
<dbReference type="PATRIC" id="fig|272947.5.peg.670"/>
<dbReference type="eggNOG" id="COG0198">
    <property type="taxonomic scope" value="Bacteria"/>
</dbReference>
<dbReference type="HOGENOM" id="CLU_093315_2_0_5"/>
<dbReference type="OrthoDB" id="9807419at2"/>
<dbReference type="Proteomes" id="UP000002480">
    <property type="component" value="Chromosome"/>
</dbReference>
<dbReference type="GO" id="GO:1990904">
    <property type="term" value="C:ribonucleoprotein complex"/>
    <property type="evidence" value="ECO:0007669"/>
    <property type="project" value="UniProtKB-KW"/>
</dbReference>
<dbReference type="GO" id="GO:0005840">
    <property type="term" value="C:ribosome"/>
    <property type="evidence" value="ECO:0007669"/>
    <property type="project" value="UniProtKB-KW"/>
</dbReference>
<dbReference type="GO" id="GO:0019843">
    <property type="term" value="F:rRNA binding"/>
    <property type="evidence" value="ECO:0007669"/>
    <property type="project" value="UniProtKB-UniRule"/>
</dbReference>
<dbReference type="GO" id="GO:0003735">
    <property type="term" value="F:structural constituent of ribosome"/>
    <property type="evidence" value="ECO:0007669"/>
    <property type="project" value="InterPro"/>
</dbReference>
<dbReference type="GO" id="GO:0006412">
    <property type="term" value="P:translation"/>
    <property type="evidence" value="ECO:0007669"/>
    <property type="project" value="UniProtKB-UniRule"/>
</dbReference>
<dbReference type="CDD" id="cd06089">
    <property type="entry name" value="KOW_RPL26"/>
    <property type="match status" value="1"/>
</dbReference>
<dbReference type="FunFam" id="2.30.30.30:FF:000004">
    <property type="entry name" value="50S ribosomal protein L24"/>
    <property type="match status" value="1"/>
</dbReference>
<dbReference type="Gene3D" id="2.30.30.30">
    <property type="match status" value="1"/>
</dbReference>
<dbReference type="HAMAP" id="MF_01326_B">
    <property type="entry name" value="Ribosomal_uL24_B"/>
    <property type="match status" value="1"/>
</dbReference>
<dbReference type="InterPro" id="IPR005824">
    <property type="entry name" value="KOW"/>
</dbReference>
<dbReference type="InterPro" id="IPR014722">
    <property type="entry name" value="Rib_uL2_dom2"/>
</dbReference>
<dbReference type="InterPro" id="IPR003256">
    <property type="entry name" value="Ribosomal_uL24"/>
</dbReference>
<dbReference type="InterPro" id="IPR005825">
    <property type="entry name" value="Ribosomal_uL24_CS"/>
</dbReference>
<dbReference type="InterPro" id="IPR041988">
    <property type="entry name" value="Ribosomal_uL24_KOW"/>
</dbReference>
<dbReference type="InterPro" id="IPR008991">
    <property type="entry name" value="Translation_prot_SH3-like_sf"/>
</dbReference>
<dbReference type="NCBIfam" id="TIGR01079">
    <property type="entry name" value="rplX_bact"/>
    <property type="match status" value="1"/>
</dbReference>
<dbReference type="PANTHER" id="PTHR12903">
    <property type="entry name" value="MITOCHONDRIAL RIBOSOMAL PROTEIN L24"/>
    <property type="match status" value="1"/>
</dbReference>
<dbReference type="Pfam" id="PF00467">
    <property type="entry name" value="KOW"/>
    <property type="match status" value="1"/>
</dbReference>
<dbReference type="Pfam" id="PF17136">
    <property type="entry name" value="ribosomal_L24"/>
    <property type="match status" value="1"/>
</dbReference>
<dbReference type="SMART" id="SM00739">
    <property type="entry name" value="KOW"/>
    <property type="match status" value="1"/>
</dbReference>
<dbReference type="SUPFAM" id="SSF50104">
    <property type="entry name" value="Translation proteins SH3-like domain"/>
    <property type="match status" value="1"/>
</dbReference>
<dbReference type="PROSITE" id="PS01108">
    <property type="entry name" value="RIBOSOMAL_L24"/>
    <property type="match status" value="1"/>
</dbReference>
<organism>
    <name type="scientific">Rickettsia prowazekii (strain Madrid E)</name>
    <dbReference type="NCBI Taxonomy" id="272947"/>
    <lineage>
        <taxon>Bacteria</taxon>
        <taxon>Pseudomonadati</taxon>
        <taxon>Pseudomonadota</taxon>
        <taxon>Alphaproteobacteria</taxon>
        <taxon>Rickettsiales</taxon>
        <taxon>Rickettsiaceae</taxon>
        <taxon>Rickettsieae</taxon>
        <taxon>Rickettsia</taxon>
        <taxon>typhus group</taxon>
    </lineage>
</organism>
<proteinExistence type="inferred from homology"/>
<accession>Q9ZCR6</accession>
<evidence type="ECO:0000255" key="1">
    <source>
        <dbReference type="HAMAP-Rule" id="MF_01326"/>
    </source>
</evidence>
<evidence type="ECO:0000305" key="2"/>
<name>RL24_RICPR</name>
<protein>
    <recommendedName>
        <fullName evidence="1">Large ribosomal subunit protein uL24</fullName>
    </recommendedName>
    <alternativeName>
        <fullName evidence="2">50S ribosomal protein L24</fullName>
    </alternativeName>
</protein>